<feature type="chain" id="PRO_0000070642" description="HTH-type transcriptional repressor FabR">
    <location>
        <begin position="1"/>
        <end position="215"/>
    </location>
</feature>
<feature type="domain" description="HTH tetR-type" evidence="1">
    <location>
        <begin position="10"/>
        <end position="70"/>
    </location>
</feature>
<feature type="DNA-binding region" description="H-T-H motif" evidence="1">
    <location>
        <begin position="33"/>
        <end position="52"/>
    </location>
</feature>
<dbReference type="EMBL" id="AE005674">
    <property type="protein sequence ID" value="AAN45474.2"/>
    <property type="status" value="ALT_INIT"/>
    <property type="molecule type" value="Genomic_DNA"/>
</dbReference>
<dbReference type="EMBL" id="AE014073">
    <property type="protein sequence ID" value="AAP18728.1"/>
    <property type="status" value="ALT_INIT"/>
    <property type="molecule type" value="Genomic_DNA"/>
</dbReference>
<dbReference type="SMR" id="P0ACU6"/>
<dbReference type="STRING" id="198214.SF4045"/>
<dbReference type="PaxDb" id="198214-SF4045"/>
<dbReference type="KEGG" id="sfl:SF4045"/>
<dbReference type="KEGG" id="sfx:S3699"/>
<dbReference type="PATRIC" id="fig|198214.7.peg.4768"/>
<dbReference type="HOGENOM" id="CLU_081861_0_0_6"/>
<dbReference type="Proteomes" id="UP000001006">
    <property type="component" value="Chromosome"/>
</dbReference>
<dbReference type="Proteomes" id="UP000002673">
    <property type="component" value="Chromosome"/>
</dbReference>
<dbReference type="GO" id="GO:0005737">
    <property type="term" value="C:cytoplasm"/>
    <property type="evidence" value="ECO:0007669"/>
    <property type="project" value="UniProtKB-SubCell"/>
</dbReference>
<dbReference type="GO" id="GO:0003677">
    <property type="term" value="F:DNA binding"/>
    <property type="evidence" value="ECO:0007669"/>
    <property type="project" value="UniProtKB-KW"/>
</dbReference>
<dbReference type="GO" id="GO:0003700">
    <property type="term" value="F:DNA-binding transcription factor activity"/>
    <property type="evidence" value="ECO:0007669"/>
    <property type="project" value="UniProtKB-UniRule"/>
</dbReference>
<dbReference type="GO" id="GO:0006633">
    <property type="term" value="P:fatty acid biosynthetic process"/>
    <property type="evidence" value="ECO:0007669"/>
    <property type="project" value="UniProtKB-UniRule"/>
</dbReference>
<dbReference type="GO" id="GO:0045717">
    <property type="term" value="P:negative regulation of fatty acid biosynthetic process"/>
    <property type="evidence" value="ECO:0007669"/>
    <property type="project" value="UniProtKB-UniRule"/>
</dbReference>
<dbReference type="FunFam" id="1.10.10.60:FF:000034">
    <property type="entry name" value="HTH-type transcriptional repressor FabR"/>
    <property type="match status" value="1"/>
</dbReference>
<dbReference type="FunFam" id="1.10.357.10:FF:000001">
    <property type="entry name" value="HTH-type transcriptional repressor FabR"/>
    <property type="match status" value="1"/>
</dbReference>
<dbReference type="Gene3D" id="1.10.10.60">
    <property type="entry name" value="Homeodomain-like"/>
    <property type="match status" value="1"/>
</dbReference>
<dbReference type="Gene3D" id="1.10.357.10">
    <property type="entry name" value="Tetracycline Repressor, domain 2"/>
    <property type="match status" value="1"/>
</dbReference>
<dbReference type="HAMAP" id="MF_01190">
    <property type="entry name" value="HTH_type_FabR"/>
    <property type="match status" value="1"/>
</dbReference>
<dbReference type="InterPro" id="IPR054129">
    <property type="entry name" value="DesT_TetR_C"/>
</dbReference>
<dbReference type="InterPro" id="IPR009057">
    <property type="entry name" value="Homeodomain-like_sf"/>
</dbReference>
<dbReference type="InterPro" id="IPR001647">
    <property type="entry name" value="HTH_TetR"/>
</dbReference>
<dbReference type="InterPro" id="IPR050692">
    <property type="entry name" value="HTH_transcr_repressor_FabR"/>
</dbReference>
<dbReference type="InterPro" id="IPR023764">
    <property type="entry name" value="Tscrpt_reg_HTH_FabR"/>
</dbReference>
<dbReference type="NCBIfam" id="NF008402">
    <property type="entry name" value="PRK11202.1"/>
    <property type="match status" value="1"/>
</dbReference>
<dbReference type="PANTHER" id="PTHR47752">
    <property type="entry name" value="HTH-TYPE TRANSCRIPTIONAL REPRESSOR FABR"/>
    <property type="match status" value="1"/>
</dbReference>
<dbReference type="PANTHER" id="PTHR47752:SF1">
    <property type="entry name" value="HTH-TYPE TRANSCRIPTIONAL REPRESSOR FABR"/>
    <property type="match status" value="1"/>
</dbReference>
<dbReference type="Pfam" id="PF21943">
    <property type="entry name" value="TetR_C_46"/>
    <property type="match status" value="1"/>
</dbReference>
<dbReference type="Pfam" id="PF00440">
    <property type="entry name" value="TetR_N"/>
    <property type="match status" value="1"/>
</dbReference>
<dbReference type="SUPFAM" id="SSF46689">
    <property type="entry name" value="Homeodomain-like"/>
    <property type="match status" value="1"/>
</dbReference>
<dbReference type="PROSITE" id="PS50977">
    <property type="entry name" value="HTH_TETR_2"/>
    <property type="match status" value="1"/>
</dbReference>
<reference key="1">
    <citation type="journal article" date="2002" name="Nucleic Acids Res.">
        <title>Genome sequence of Shigella flexneri 2a: insights into pathogenicity through comparison with genomes of Escherichia coli K12 and O157.</title>
        <authorList>
            <person name="Jin Q."/>
            <person name="Yuan Z."/>
            <person name="Xu J."/>
            <person name="Wang Y."/>
            <person name="Shen Y."/>
            <person name="Lu W."/>
            <person name="Wang J."/>
            <person name="Liu H."/>
            <person name="Yang J."/>
            <person name="Yang F."/>
            <person name="Zhang X."/>
            <person name="Zhang J."/>
            <person name="Yang G."/>
            <person name="Wu H."/>
            <person name="Qu D."/>
            <person name="Dong J."/>
            <person name="Sun L."/>
            <person name="Xue Y."/>
            <person name="Zhao A."/>
            <person name="Gao Y."/>
            <person name="Zhu J."/>
            <person name="Kan B."/>
            <person name="Ding K."/>
            <person name="Chen S."/>
            <person name="Cheng H."/>
            <person name="Yao Z."/>
            <person name="He B."/>
            <person name="Chen R."/>
            <person name="Ma D."/>
            <person name="Qiang B."/>
            <person name="Wen Y."/>
            <person name="Hou Y."/>
            <person name="Yu J."/>
        </authorList>
    </citation>
    <scope>NUCLEOTIDE SEQUENCE [LARGE SCALE GENOMIC DNA]</scope>
    <source>
        <strain>301 / Serotype 2a</strain>
    </source>
</reference>
<reference key="2">
    <citation type="journal article" date="2003" name="Infect. Immun.">
        <title>Complete genome sequence and comparative genomics of Shigella flexneri serotype 2a strain 2457T.</title>
        <authorList>
            <person name="Wei J."/>
            <person name="Goldberg M.B."/>
            <person name="Burland V."/>
            <person name="Venkatesan M.M."/>
            <person name="Deng W."/>
            <person name="Fournier G."/>
            <person name="Mayhew G.F."/>
            <person name="Plunkett G. III"/>
            <person name="Rose D.J."/>
            <person name="Darling A."/>
            <person name="Mau B."/>
            <person name="Perna N.T."/>
            <person name="Payne S.M."/>
            <person name="Runyen-Janecky L.J."/>
            <person name="Zhou S."/>
            <person name="Schwartz D.C."/>
            <person name="Blattner F.R."/>
        </authorList>
    </citation>
    <scope>NUCLEOTIDE SEQUENCE [LARGE SCALE GENOMIC DNA]</scope>
    <source>
        <strain>ATCC 700930 / 2457T / Serotype 2a</strain>
    </source>
</reference>
<proteinExistence type="inferred from homology"/>
<accession>P0ACU6</accession>
<accession>P27307</accession>
<sequence>MGVRAQQKEKTRRSLVEAAFSQLSAERSFASLSLREVAREAGIAPTSFYRHFRDVDELGLTMVDESGLMLRQLMRQARQRIAKGGSVIRTSVSTFMEFIGNNPNAFRLLLRERSGTSAAFRAAVAREIQHFIAELADYLELENHMPRAFTEAQAEAMVTIVFSAGAEALDVGVEQRRQLEERLVLQLRMISKGAYYWYRREQEKTAIIPGNVKDE</sequence>
<protein>
    <recommendedName>
        <fullName evidence="1">HTH-type transcriptional repressor FabR</fullName>
    </recommendedName>
</protein>
<organism>
    <name type="scientific">Shigella flexneri</name>
    <dbReference type="NCBI Taxonomy" id="623"/>
    <lineage>
        <taxon>Bacteria</taxon>
        <taxon>Pseudomonadati</taxon>
        <taxon>Pseudomonadota</taxon>
        <taxon>Gammaproteobacteria</taxon>
        <taxon>Enterobacterales</taxon>
        <taxon>Enterobacteriaceae</taxon>
        <taxon>Shigella</taxon>
    </lineage>
</organism>
<comment type="function">
    <text evidence="1">Represses the transcription of fabB, involved in unsaturated fatty acid (UFA) biosynthesis. By controlling UFA production, FabR directly influences the physical properties of the membrane bilayer.</text>
</comment>
<comment type="subunit">
    <text evidence="1">Homodimer.</text>
</comment>
<comment type="subcellular location">
    <subcellularLocation>
        <location evidence="1">Cytoplasm</location>
    </subcellularLocation>
</comment>
<comment type="sequence caution" evidence="2">
    <conflict type="erroneous initiation">
        <sequence resource="EMBL-CDS" id="AAN45474"/>
    </conflict>
    <text>Extended N-terminus.</text>
</comment>
<comment type="sequence caution" evidence="2">
    <conflict type="erroneous initiation">
        <sequence resource="EMBL-CDS" id="AAP18728"/>
    </conflict>
    <text>Extended N-terminus.</text>
</comment>
<name>FABR_SHIFL</name>
<gene>
    <name evidence="1" type="primary">fabR</name>
    <name type="ordered locus">SF4045</name>
    <name type="ordered locus">S3699</name>
</gene>
<keyword id="KW-0963">Cytoplasm</keyword>
<keyword id="KW-0238">DNA-binding</keyword>
<keyword id="KW-0275">Fatty acid biosynthesis</keyword>
<keyword id="KW-0276">Fatty acid metabolism</keyword>
<keyword id="KW-0444">Lipid biosynthesis</keyword>
<keyword id="KW-0443">Lipid metabolism</keyword>
<keyword id="KW-1185">Reference proteome</keyword>
<keyword id="KW-0678">Repressor</keyword>
<keyword id="KW-0804">Transcription</keyword>
<keyword id="KW-0805">Transcription regulation</keyword>
<evidence type="ECO:0000255" key="1">
    <source>
        <dbReference type="HAMAP-Rule" id="MF_01190"/>
    </source>
</evidence>
<evidence type="ECO:0000305" key="2"/>